<reference key="1">
    <citation type="submission" date="2006-06" db="EMBL/GenBank/DDBJ databases">
        <title>Complete sequence of chromosome of Mycobacterium sp. MCS.</title>
        <authorList>
            <consortium name="US DOE Joint Genome Institute"/>
            <person name="Copeland A."/>
            <person name="Lucas S."/>
            <person name="Lapidus A."/>
            <person name="Barry K."/>
            <person name="Detter J.C."/>
            <person name="Glavina del Rio T."/>
            <person name="Hammon N."/>
            <person name="Israni S."/>
            <person name="Dalin E."/>
            <person name="Tice H."/>
            <person name="Pitluck S."/>
            <person name="Martinez M."/>
            <person name="Schmutz J."/>
            <person name="Larimer F."/>
            <person name="Land M."/>
            <person name="Hauser L."/>
            <person name="Kyrpides N."/>
            <person name="Kim E."/>
            <person name="Miller C.D."/>
            <person name="Hughes J.E."/>
            <person name="Anderson A.J."/>
            <person name="Sims R.C."/>
            <person name="Richardson P."/>
        </authorList>
    </citation>
    <scope>NUCLEOTIDE SEQUENCE [LARGE SCALE GENOMIC DNA]</scope>
    <source>
        <strain>MCS</strain>
    </source>
</reference>
<evidence type="ECO:0000255" key="1">
    <source>
        <dbReference type="HAMAP-Rule" id="MF_00064"/>
    </source>
</evidence>
<proteinExistence type="inferred from homology"/>
<protein>
    <recommendedName>
        <fullName evidence="1">Sulfate adenylyltransferase subunit 2</fullName>
        <ecNumber evidence="1">2.7.7.4</ecNumber>
    </recommendedName>
    <alternativeName>
        <fullName evidence="1">ATP-sulfurylase small subunit</fullName>
    </alternativeName>
    <alternativeName>
        <fullName evidence="1">Sulfate adenylate transferase</fullName>
        <shortName evidence="1">SAT</shortName>
    </alternativeName>
</protein>
<feature type="chain" id="PRO_1000092211" description="Sulfate adenylyltransferase subunit 2">
    <location>
        <begin position="1"/>
        <end position="309"/>
    </location>
</feature>
<gene>
    <name evidence="1" type="primary">cysD</name>
    <name type="ordered locus">Mmcs_3919</name>
</gene>
<comment type="function">
    <text evidence="1">With CysN forms the ATP sulfurylase (ATPS) that catalyzes the adenylation of sulfate producing adenosine 5'-phosphosulfate (APS) and diphosphate, the first enzymatic step in sulfur assimilation pathway. APS synthesis involves the formation of a high-energy phosphoric-sulfuric acid anhydride bond driven by GTP hydrolysis by CysN coupled to ATP hydrolysis by CysD.</text>
</comment>
<comment type="catalytic activity">
    <reaction evidence="1">
        <text>sulfate + ATP + H(+) = adenosine 5'-phosphosulfate + diphosphate</text>
        <dbReference type="Rhea" id="RHEA:18133"/>
        <dbReference type="ChEBI" id="CHEBI:15378"/>
        <dbReference type="ChEBI" id="CHEBI:16189"/>
        <dbReference type="ChEBI" id="CHEBI:30616"/>
        <dbReference type="ChEBI" id="CHEBI:33019"/>
        <dbReference type="ChEBI" id="CHEBI:58243"/>
        <dbReference type="EC" id="2.7.7.4"/>
    </reaction>
</comment>
<comment type="pathway">
    <text evidence="1">Sulfur metabolism; hydrogen sulfide biosynthesis; sulfite from sulfate: step 1/3.</text>
</comment>
<comment type="subunit">
    <text evidence="1">Heterodimer composed of CysD, the smaller subunit, and CysN.</text>
</comment>
<comment type="similarity">
    <text evidence="1">Belongs to the PAPS reductase family. CysD subfamily.</text>
</comment>
<dbReference type="EC" id="2.7.7.4" evidence="1"/>
<dbReference type="EMBL" id="CP000384">
    <property type="protein sequence ID" value="ABG10024.1"/>
    <property type="molecule type" value="Genomic_DNA"/>
</dbReference>
<dbReference type="SMR" id="Q1B510"/>
<dbReference type="KEGG" id="mmc:Mmcs_3919"/>
<dbReference type="HOGENOM" id="CLU_043026_0_0_11"/>
<dbReference type="BioCyc" id="MSP164756:G1G6O-4004-MONOMER"/>
<dbReference type="UniPathway" id="UPA00140">
    <property type="reaction ID" value="UER00204"/>
</dbReference>
<dbReference type="GO" id="GO:0005524">
    <property type="term" value="F:ATP binding"/>
    <property type="evidence" value="ECO:0007669"/>
    <property type="project" value="UniProtKB-KW"/>
</dbReference>
<dbReference type="GO" id="GO:0004781">
    <property type="term" value="F:sulfate adenylyltransferase (ATP) activity"/>
    <property type="evidence" value="ECO:0007669"/>
    <property type="project" value="UniProtKB-UniRule"/>
</dbReference>
<dbReference type="GO" id="GO:0070814">
    <property type="term" value="P:hydrogen sulfide biosynthetic process"/>
    <property type="evidence" value="ECO:0007669"/>
    <property type="project" value="UniProtKB-UniRule"/>
</dbReference>
<dbReference type="GO" id="GO:0000103">
    <property type="term" value="P:sulfate assimilation"/>
    <property type="evidence" value="ECO:0007669"/>
    <property type="project" value="UniProtKB-UniRule"/>
</dbReference>
<dbReference type="FunFam" id="3.40.50.620:FF:000002">
    <property type="entry name" value="Sulfate adenylyltransferase subunit 2"/>
    <property type="match status" value="1"/>
</dbReference>
<dbReference type="Gene3D" id="3.40.50.620">
    <property type="entry name" value="HUPs"/>
    <property type="match status" value="1"/>
</dbReference>
<dbReference type="HAMAP" id="MF_00064">
    <property type="entry name" value="Sulf_adenylyltr_sub2"/>
    <property type="match status" value="1"/>
</dbReference>
<dbReference type="InterPro" id="IPR002500">
    <property type="entry name" value="PAPS_reduct_dom"/>
</dbReference>
<dbReference type="InterPro" id="IPR014729">
    <property type="entry name" value="Rossmann-like_a/b/a_fold"/>
</dbReference>
<dbReference type="InterPro" id="IPR011784">
    <property type="entry name" value="SO4_adenylTrfase_ssu"/>
</dbReference>
<dbReference type="InterPro" id="IPR050128">
    <property type="entry name" value="Sulfate_adenylyltrnsfr_sub2"/>
</dbReference>
<dbReference type="NCBIfam" id="TIGR02039">
    <property type="entry name" value="CysD"/>
    <property type="match status" value="1"/>
</dbReference>
<dbReference type="NCBIfam" id="NF003587">
    <property type="entry name" value="PRK05253.1"/>
    <property type="match status" value="1"/>
</dbReference>
<dbReference type="NCBIfam" id="NF009214">
    <property type="entry name" value="PRK12563.1"/>
    <property type="match status" value="1"/>
</dbReference>
<dbReference type="PANTHER" id="PTHR43196">
    <property type="entry name" value="SULFATE ADENYLYLTRANSFERASE SUBUNIT 2"/>
    <property type="match status" value="1"/>
</dbReference>
<dbReference type="PANTHER" id="PTHR43196:SF1">
    <property type="entry name" value="SULFATE ADENYLYLTRANSFERASE SUBUNIT 2"/>
    <property type="match status" value="1"/>
</dbReference>
<dbReference type="Pfam" id="PF01507">
    <property type="entry name" value="PAPS_reduct"/>
    <property type="match status" value="1"/>
</dbReference>
<dbReference type="PIRSF" id="PIRSF002936">
    <property type="entry name" value="CysDAde_trans"/>
    <property type="match status" value="1"/>
</dbReference>
<dbReference type="SUPFAM" id="SSF52402">
    <property type="entry name" value="Adenine nucleotide alpha hydrolases-like"/>
    <property type="match status" value="1"/>
</dbReference>
<name>CYSD_MYCSS</name>
<accession>Q1B510</accession>
<organism>
    <name type="scientific">Mycobacterium sp. (strain MCS)</name>
    <dbReference type="NCBI Taxonomy" id="164756"/>
    <lineage>
        <taxon>Bacteria</taxon>
        <taxon>Bacillati</taxon>
        <taxon>Actinomycetota</taxon>
        <taxon>Actinomycetes</taxon>
        <taxon>Mycobacteriales</taxon>
        <taxon>Mycobacteriaceae</taxon>
        <taxon>Mycobacterium</taxon>
    </lineage>
</organism>
<sequence length="309" mass="34950">MTAAHVAAPEPGQYELSHLRLLEAEAIHIIREVAAEFERPVLLFSGGKDSIVMLHLAIKAFAPARLPFPVMHVDTGHNFDEVISTRDRLVAENGVRLVVASVQEDIDAGRVVDNGPSRNPLQTITLLRAIRENRFDAAFGGARRDEEKARAKERVFSFRDEFGQWDPKAQRPELWNIYNGRHRKGEHIRVFPLSNWTEYDIWAYIGAEGITLPGIYYAHTRPVFQRDGMLLAVHPYMQPRDDEEVFETSVRFRTVGDVTCTGCVESTASTVEDIIAETAVSRLTERGATRADDRISEAGMEDRKREGYF</sequence>
<keyword id="KW-0067">ATP-binding</keyword>
<keyword id="KW-0547">Nucleotide-binding</keyword>
<keyword id="KW-0548">Nucleotidyltransferase</keyword>
<keyword id="KW-0808">Transferase</keyword>